<gene>
    <name evidence="1" type="primary">rpsT</name>
    <name type="ordered locus">LBF_0495</name>
</gene>
<reference key="1">
    <citation type="journal article" date="2008" name="PLoS ONE">
        <title>Genome sequence of the saprophyte Leptospira biflexa provides insights into the evolution of Leptospira and the pathogenesis of leptospirosis.</title>
        <authorList>
            <person name="Picardeau M."/>
            <person name="Bulach D.M."/>
            <person name="Bouchier C."/>
            <person name="Zuerner R.L."/>
            <person name="Zidane N."/>
            <person name="Wilson P.J."/>
            <person name="Creno S."/>
            <person name="Kuczek E.S."/>
            <person name="Bommezzadri S."/>
            <person name="Davis J.C."/>
            <person name="McGrath A."/>
            <person name="Johnson M.J."/>
            <person name="Boursaux-Eude C."/>
            <person name="Seemann T."/>
            <person name="Rouy Z."/>
            <person name="Coppel R.L."/>
            <person name="Rood J.I."/>
            <person name="Lajus A."/>
            <person name="Davies J.K."/>
            <person name="Medigue C."/>
            <person name="Adler B."/>
        </authorList>
    </citation>
    <scope>NUCLEOTIDE SEQUENCE [LARGE SCALE GENOMIC DNA]</scope>
    <source>
        <strain>Patoc 1 / Ames</strain>
    </source>
</reference>
<name>RS20_LEPBA</name>
<protein>
    <recommendedName>
        <fullName evidence="1">Small ribosomal subunit protein bS20</fullName>
    </recommendedName>
    <alternativeName>
        <fullName evidence="3">30S ribosomal protein S20</fullName>
    </alternativeName>
</protein>
<organism>
    <name type="scientific">Leptospira biflexa serovar Patoc (strain Patoc 1 / Ames)</name>
    <dbReference type="NCBI Taxonomy" id="355278"/>
    <lineage>
        <taxon>Bacteria</taxon>
        <taxon>Pseudomonadati</taxon>
        <taxon>Spirochaetota</taxon>
        <taxon>Spirochaetia</taxon>
        <taxon>Leptospirales</taxon>
        <taxon>Leptospiraceae</taxon>
        <taxon>Leptospira</taxon>
    </lineage>
</organism>
<evidence type="ECO:0000255" key="1">
    <source>
        <dbReference type="HAMAP-Rule" id="MF_00500"/>
    </source>
</evidence>
<evidence type="ECO:0000256" key="2">
    <source>
        <dbReference type="SAM" id="MobiDB-lite"/>
    </source>
</evidence>
<evidence type="ECO:0000305" key="3"/>
<proteinExistence type="inferred from homology"/>
<keyword id="KW-0687">Ribonucleoprotein</keyword>
<keyword id="KW-0689">Ribosomal protein</keyword>
<keyword id="KW-0694">RNA-binding</keyword>
<keyword id="KW-0699">rRNA-binding</keyword>
<comment type="function">
    <text evidence="1">Binds directly to 16S ribosomal RNA.</text>
</comment>
<comment type="similarity">
    <text evidence="1">Belongs to the bacterial ribosomal protein bS20 family.</text>
</comment>
<sequence>MANLKSSKKDIRRTARRKERNGEDRTELRTYARLLIKAIKSGDKTEALTVFSKLSSKLDRAAKTKLIHKKNADRKKSRMALRINSIEAKAA</sequence>
<dbReference type="EMBL" id="CP000777">
    <property type="protein sequence ID" value="ABZ93034.1"/>
    <property type="molecule type" value="Genomic_DNA"/>
</dbReference>
<dbReference type="RefSeq" id="WP_012387540.1">
    <property type="nucleotide sequence ID" value="NC_010842.1"/>
</dbReference>
<dbReference type="SMR" id="B0SBL3"/>
<dbReference type="KEGG" id="lbf:LBF_0495"/>
<dbReference type="HOGENOM" id="CLU_160655_3_1_12"/>
<dbReference type="GO" id="GO:0005829">
    <property type="term" value="C:cytosol"/>
    <property type="evidence" value="ECO:0007669"/>
    <property type="project" value="TreeGrafter"/>
</dbReference>
<dbReference type="GO" id="GO:0015935">
    <property type="term" value="C:small ribosomal subunit"/>
    <property type="evidence" value="ECO:0007669"/>
    <property type="project" value="TreeGrafter"/>
</dbReference>
<dbReference type="GO" id="GO:0070181">
    <property type="term" value="F:small ribosomal subunit rRNA binding"/>
    <property type="evidence" value="ECO:0007669"/>
    <property type="project" value="TreeGrafter"/>
</dbReference>
<dbReference type="GO" id="GO:0003735">
    <property type="term" value="F:structural constituent of ribosome"/>
    <property type="evidence" value="ECO:0007669"/>
    <property type="project" value="InterPro"/>
</dbReference>
<dbReference type="GO" id="GO:0006412">
    <property type="term" value="P:translation"/>
    <property type="evidence" value="ECO:0007669"/>
    <property type="project" value="UniProtKB-UniRule"/>
</dbReference>
<dbReference type="Gene3D" id="1.20.58.110">
    <property type="entry name" value="Ribosomal protein S20"/>
    <property type="match status" value="1"/>
</dbReference>
<dbReference type="HAMAP" id="MF_00500">
    <property type="entry name" value="Ribosomal_bS20"/>
    <property type="match status" value="1"/>
</dbReference>
<dbReference type="InterPro" id="IPR002583">
    <property type="entry name" value="Ribosomal_bS20"/>
</dbReference>
<dbReference type="InterPro" id="IPR036510">
    <property type="entry name" value="Ribosomal_bS20_sf"/>
</dbReference>
<dbReference type="NCBIfam" id="TIGR00029">
    <property type="entry name" value="S20"/>
    <property type="match status" value="1"/>
</dbReference>
<dbReference type="PANTHER" id="PTHR33398">
    <property type="entry name" value="30S RIBOSOMAL PROTEIN S20"/>
    <property type="match status" value="1"/>
</dbReference>
<dbReference type="PANTHER" id="PTHR33398:SF1">
    <property type="entry name" value="SMALL RIBOSOMAL SUBUNIT PROTEIN BS20C"/>
    <property type="match status" value="1"/>
</dbReference>
<dbReference type="Pfam" id="PF01649">
    <property type="entry name" value="Ribosomal_S20p"/>
    <property type="match status" value="1"/>
</dbReference>
<dbReference type="SUPFAM" id="SSF46992">
    <property type="entry name" value="Ribosomal protein S20"/>
    <property type="match status" value="1"/>
</dbReference>
<accession>B0SBL3</accession>
<feature type="chain" id="PRO_1000126469" description="Small ribosomal subunit protein bS20">
    <location>
        <begin position="1"/>
        <end position="91"/>
    </location>
</feature>
<feature type="region of interest" description="Disordered" evidence="2">
    <location>
        <begin position="1"/>
        <end position="26"/>
    </location>
</feature>